<organism>
    <name type="scientific">Anaeromyxobacter dehalogenans (strain 2CP-C)</name>
    <dbReference type="NCBI Taxonomy" id="290397"/>
    <lineage>
        <taxon>Bacteria</taxon>
        <taxon>Pseudomonadati</taxon>
        <taxon>Myxococcota</taxon>
        <taxon>Myxococcia</taxon>
        <taxon>Myxococcales</taxon>
        <taxon>Cystobacterineae</taxon>
        <taxon>Anaeromyxobacteraceae</taxon>
        <taxon>Anaeromyxobacter</taxon>
    </lineage>
</organism>
<accession>Q2INZ4</accession>
<evidence type="ECO:0000255" key="1">
    <source>
        <dbReference type="HAMAP-Rule" id="MF_00060"/>
    </source>
</evidence>
<dbReference type="EC" id="3.1.3.5" evidence="1"/>
<dbReference type="EMBL" id="CP000251">
    <property type="protein sequence ID" value="ABC80528.1"/>
    <property type="molecule type" value="Genomic_DNA"/>
</dbReference>
<dbReference type="RefSeq" id="WP_011419811.1">
    <property type="nucleotide sequence ID" value="NC_007760.1"/>
</dbReference>
<dbReference type="SMR" id="Q2INZ4"/>
<dbReference type="STRING" id="290397.Adeh_0753"/>
<dbReference type="KEGG" id="ade:Adeh_0753"/>
<dbReference type="eggNOG" id="COG0496">
    <property type="taxonomic scope" value="Bacteria"/>
</dbReference>
<dbReference type="HOGENOM" id="CLU_045192_1_2_7"/>
<dbReference type="OrthoDB" id="9780815at2"/>
<dbReference type="Proteomes" id="UP000001935">
    <property type="component" value="Chromosome"/>
</dbReference>
<dbReference type="GO" id="GO:0005737">
    <property type="term" value="C:cytoplasm"/>
    <property type="evidence" value="ECO:0007669"/>
    <property type="project" value="UniProtKB-SubCell"/>
</dbReference>
<dbReference type="GO" id="GO:0008254">
    <property type="term" value="F:3'-nucleotidase activity"/>
    <property type="evidence" value="ECO:0007669"/>
    <property type="project" value="TreeGrafter"/>
</dbReference>
<dbReference type="GO" id="GO:0008253">
    <property type="term" value="F:5'-nucleotidase activity"/>
    <property type="evidence" value="ECO:0007669"/>
    <property type="project" value="UniProtKB-UniRule"/>
</dbReference>
<dbReference type="GO" id="GO:0004309">
    <property type="term" value="F:exopolyphosphatase activity"/>
    <property type="evidence" value="ECO:0007669"/>
    <property type="project" value="TreeGrafter"/>
</dbReference>
<dbReference type="GO" id="GO:0046872">
    <property type="term" value="F:metal ion binding"/>
    <property type="evidence" value="ECO:0007669"/>
    <property type="project" value="UniProtKB-UniRule"/>
</dbReference>
<dbReference type="GO" id="GO:0000166">
    <property type="term" value="F:nucleotide binding"/>
    <property type="evidence" value="ECO:0007669"/>
    <property type="project" value="UniProtKB-KW"/>
</dbReference>
<dbReference type="FunFam" id="3.40.1210.10:FF:000001">
    <property type="entry name" value="5'/3'-nucleotidase SurE"/>
    <property type="match status" value="1"/>
</dbReference>
<dbReference type="Gene3D" id="3.40.1210.10">
    <property type="entry name" value="Survival protein SurE-like phosphatase/nucleotidase"/>
    <property type="match status" value="1"/>
</dbReference>
<dbReference type="HAMAP" id="MF_00060">
    <property type="entry name" value="SurE"/>
    <property type="match status" value="1"/>
</dbReference>
<dbReference type="InterPro" id="IPR030048">
    <property type="entry name" value="SurE"/>
</dbReference>
<dbReference type="InterPro" id="IPR002828">
    <property type="entry name" value="SurE-like_Pase/nucleotidase"/>
</dbReference>
<dbReference type="InterPro" id="IPR036523">
    <property type="entry name" value="SurE-like_sf"/>
</dbReference>
<dbReference type="NCBIfam" id="NF001490">
    <property type="entry name" value="PRK00346.1-4"/>
    <property type="match status" value="1"/>
</dbReference>
<dbReference type="NCBIfam" id="TIGR00087">
    <property type="entry name" value="surE"/>
    <property type="match status" value="1"/>
</dbReference>
<dbReference type="PANTHER" id="PTHR30457">
    <property type="entry name" value="5'-NUCLEOTIDASE SURE"/>
    <property type="match status" value="1"/>
</dbReference>
<dbReference type="PANTHER" id="PTHR30457:SF12">
    <property type="entry name" value="5'_3'-NUCLEOTIDASE SURE"/>
    <property type="match status" value="1"/>
</dbReference>
<dbReference type="Pfam" id="PF01975">
    <property type="entry name" value="SurE"/>
    <property type="match status" value="1"/>
</dbReference>
<dbReference type="SUPFAM" id="SSF64167">
    <property type="entry name" value="SurE-like"/>
    <property type="match status" value="1"/>
</dbReference>
<proteinExistence type="inferred from homology"/>
<name>SURE_ANADE</name>
<reference key="1">
    <citation type="submission" date="2006-01" db="EMBL/GenBank/DDBJ databases">
        <title>Complete sequence of Anaeromyxobacter dehalogenans 2CP-C.</title>
        <authorList>
            <person name="Copeland A."/>
            <person name="Lucas S."/>
            <person name="Lapidus A."/>
            <person name="Barry K."/>
            <person name="Detter J.C."/>
            <person name="Glavina T."/>
            <person name="Hammon N."/>
            <person name="Israni S."/>
            <person name="Pitluck S."/>
            <person name="Brettin T."/>
            <person name="Bruce D."/>
            <person name="Han C."/>
            <person name="Tapia R."/>
            <person name="Gilna P."/>
            <person name="Kiss H."/>
            <person name="Schmutz J."/>
            <person name="Larimer F."/>
            <person name="Land M."/>
            <person name="Kyrpides N."/>
            <person name="Anderson I."/>
            <person name="Sanford R.A."/>
            <person name="Ritalahti K.M."/>
            <person name="Thomas H.S."/>
            <person name="Kirby J.R."/>
            <person name="Zhulin I.B."/>
            <person name="Loeffler F.E."/>
            <person name="Richardson P."/>
        </authorList>
    </citation>
    <scope>NUCLEOTIDE SEQUENCE [LARGE SCALE GENOMIC DNA]</scope>
    <source>
        <strain>2CP-C</strain>
    </source>
</reference>
<protein>
    <recommendedName>
        <fullName evidence="1">5'-nucleotidase SurE</fullName>
        <ecNumber evidence="1">3.1.3.5</ecNumber>
    </recommendedName>
    <alternativeName>
        <fullName evidence="1">Nucleoside 5'-monophosphate phosphohydrolase</fullName>
    </alternativeName>
</protein>
<comment type="function">
    <text evidence="1">Nucleotidase that shows phosphatase activity on nucleoside 5'-monophosphates.</text>
</comment>
<comment type="catalytic activity">
    <reaction evidence="1">
        <text>a ribonucleoside 5'-phosphate + H2O = a ribonucleoside + phosphate</text>
        <dbReference type="Rhea" id="RHEA:12484"/>
        <dbReference type="ChEBI" id="CHEBI:15377"/>
        <dbReference type="ChEBI" id="CHEBI:18254"/>
        <dbReference type="ChEBI" id="CHEBI:43474"/>
        <dbReference type="ChEBI" id="CHEBI:58043"/>
        <dbReference type="EC" id="3.1.3.5"/>
    </reaction>
</comment>
<comment type="cofactor">
    <cofactor evidence="1">
        <name>a divalent metal cation</name>
        <dbReference type="ChEBI" id="CHEBI:60240"/>
    </cofactor>
    <text evidence="1">Binds 1 divalent metal cation per subunit.</text>
</comment>
<comment type="subcellular location">
    <subcellularLocation>
        <location evidence="1">Cytoplasm</location>
    </subcellularLocation>
</comment>
<comment type="similarity">
    <text evidence="1">Belongs to the SurE nucleotidase family.</text>
</comment>
<keyword id="KW-0963">Cytoplasm</keyword>
<keyword id="KW-0378">Hydrolase</keyword>
<keyword id="KW-0479">Metal-binding</keyword>
<keyword id="KW-0547">Nucleotide-binding</keyword>
<keyword id="KW-1185">Reference proteome</keyword>
<gene>
    <name evidence="1" type="primary">surE</name>
    <name type="ordered locus">Adeh_0753</name>
</gene>
<sequence length="254" mass="27361">MRVLLSNDDGVHAAGLRALAEAFHGDEVWVVAPDREQSASSHAISLHRPLRLLEVAPRWYAVDGTPTDAVYMGLNLVLRDARPDVVVSGVNHGPNLGNDVLYSGTVAAAMEGALLGVNAVAVSLAAPPPHDFGEAARFAAALARQVVARPPPAPVLLNVNVPPGPVRGYRFTRLGRRTYGNEVVEKTDPRGRKYYWIGGEGRVHNEDIPGSDCNAVLLERLAAVTPLHLDGTHDPMFQELRSWTVPGYEKEPAP</sequence>
<feature type="chain" id="PRO_0000235589" description="5'-nucleotidase SurE">
    <location>
        <begin position="1"/>
        <end position="254"/>
    </location>
</feature>
<feature type="binding site" evidence="1">
    <location>
        <position position="8"/>
    </location>
    <ligand>
        <name>a divalent metal cation</name>
        <dbReference type="ChEBI" id="CHEBI:60240"/>
    </ligand>
</feature>
<feature type="binding site" evidence="1">
    <location>
        <position position="9"/>
    </location>
    <ligand>
        <name>a divalent metal cation</name>
        <dbReference type="ChEBI" id="CHEBI:60240"/>
    </ligand>
</feature>
<feature type="binding site" evidence="1">
    <location>
        <position position="38"/>
    </location>
    <ligand>
        <name>a divalent metal cation</name>
        <dbReference type="ChEBI" id="CHEBI:60240"/>
    </ligand>
</feature>
<feature type="binding site" evidence="1">
    <location>
        <position position="91"/>
    </location>
    <ligand>
        <name>a divalent metal cation</name>
        <dbReference type="ChEBI" id="CHEBI:60240"/>
    </ligand>
</feature>